<protein>
    <recommendedName>
        <fullName evidence="2">Polymerase acidic protein</fullName>
        <ecNumber evidence="2">3.1.-.-</ecNumber>
    </recommendedName>
    <alternativeName>
        <fullName evidence="2">RNA-directed RNA polymerase subunit P2</fullName>
    </alternativeName>
</protein>
<dbReference type="EC" id="3.1.-.-" evidence="2"/>
<dbReference type="EMBL" id="AF046095">
    <property type="protein sequence ID" value="AAC32097.1"/>
    <property type="molecule type" value="Genomic_RNA"/>
</dbReference>
<dbReference type="EMBL" id="AJ289874">
    <property type="protein sequence ID" value="CAB95840.1"/>
    <property type="molecule type" value="Genomic_RNA"/>
</dbReference>
<dbReference type="EMBL" id="AF084267">
    <property type="protein sequence ID" value="AAF74317.1"/>
    <property type="molecule type" value="Genomic_RNA"/>
</dbReference>
<dbReference type="EMBL" id="AF036361">
    <property type="protein sequence ID" value="AAC34270.1"/>
    <property type="molecule type" value="Genomic_RNA"/>
</dbReference>
<dbReference type="PDB" id="7N4K">
    <property type="method" value="X-ray"/>
    <property type="resolution" value="1.85 A"/>
    <property type="chains" value="C=224-233"/>
</dbReference>
<dbReference type="PDB" id="7N5C">
    <property type="method" value="X-ray"/>
    <property type="resolution" value="1.87 A"/>
    <property type="chains" value="C=224-233"/>
</dbReference>
<dbReference type="PDB" id="7N5P">
    <property type="method" value="X-ray"/>
    <property type="resolution" value="2.09 A"/>
    <property type="chains" value="C=224-233"/>
</dbReference>
<dbReference type="PDB" id="7N5Q">
    <property type="method" value="X-ray"/>
    <property type="resolution" value="1.76 A"/>
    <property type="chains" value="C/H=224-233"/>
</dbReference>
<dbReference type="PDBsum" id="7N4K"/>
<dbReference type="PDBsum" id="7N5C"/>
<dbReference type="PDBsum" id="7N5P"/>
<dbReference type="PDBsum" id="7N5Q"/>
<dbReference type="SMR" id="O89752"/>
<dbReference type="MEROPS" id="S62.001"/>
<dbReference type="Proteomes" id="UP000008587">
    <property type="component" value="Genome"/>
</dbReference>
<dbReference type="GO" id="GO:0030430">
    <property type="term" value="C:host cell cytoplasm"/>
    <property type="evidence" value="ECO:0007669"/>
    <property type="project" value="UniProtKB-SubCell"/>
</dbReference>
<dbReference type="GO" id="GO:0042025">
    <property type="term" value="C:host cell nucleus"/>
    <property type="evidence" value="ECO:0007669"/>
    <property type="project" value="UniProtKB-SubCell"/>
</dbReference>
<dbReference type="GO" id="GO:0004519">
    <property type="term" value="F:endonuclease activity"/>
    <property type="evidence" value="ECO:0007669"/>
    <property type="project" value="UniProtKB-KW"/>
</dbReference>
<dbReference type="GO" id="GO:0046872">
    <property type="term" value="F:metal ion binding"/>
    <property type="evidence" value="ECO:0007669"/>
    <property type="project" value="UniProtKB-KW"/>
</dbReference>
<dbReference type="GO" id="GO:0003723">
    <property type="term" value="F:RNA binding"/>
    <property type="evidence" value="ECO:0007669"/>
    <property type="project" value="UniProtKB-UniRule"/>
</dbReference>
<dbReference type="GO" id="GO:0075526">
    <property type="term" value="P:cap snatching"/>
    <property type="evidence" value="ECO:0007669"/>
    <property type="project" value="UniProtKB-UniRule"/>
</dbReference>
<dbReference type="GO" id="GO:0006351">
    <property type="term" value="P:DNA-templated transcription"/>
    <property type="evidence" value="ECO:0007669"/>
    <property type="project" value="UniProtKB-UniRule"/>
</dbReference>
<dbReference type="GO" id="GO:0039657">
    <property type="term" value="P:symbiont-mediated suppression of host gene expression"/>
    <property type="evidence" value="ECO:0007669"/>
    <property type="project" value="UniProtKB-KW"/>
</dbReference>
<dbReference type="GO" id="GO:0039523">
    <property type="term" value="P:symbiont-mediated suppression of host mRNA transcription via inhibition of RNA polymerase II activity"/>
    <property type="evidence" value="ECO:0007669"/>
    <property type="project" value="UniProtKB-UniRule"/>
</dbReference>
<dbReference type="GO" id="GO:0039694">
    <property type="term" value="P:viral RNA genome replication"/>
    <property type="evidence" value="ECO:0007669"/>
    <property type="project" value="InterPro"/>
</dbReference>
<dbReference type="GO" id="GO:0075523">
    <property type="term" value="P:viral translational frameshifting"/>
    <property type="evidence" value="ECO:0007669"/>
    <property type="project" value="UniProtKB-KW"/>
</dbReference>
<dbReference type="FunFam" id="3.40.91.90:FF:000001">
    <property type="entry name" value="Polymerase acidic protein"/>
    <property type="match status" value="1"/>
</dbReference>
<dbReference type="Gene3D" id="3.40.91.90">
    <property type="entry name" value="Influenza RNA-dependent RNA polymerase subunit PA, endonuclease domain"/>
    <property type="match status" value="1"/>
</dbReference>
<dbReference type="HAMAP" id="MF_04063">
    <property type="entry name" value="INFV_PA"/>
    <property type="match status" value="1"/>
</dbReference>
<dbReference type="InterPro" id="IPR037534">
    <property type="entry name" value="INFV_PA"/>
</dbReference>
<dbReference type="InterPro" id="IPR001009">
    <property type="entry name" value="PA/PA-X"/>
</dbReference>
<dbReference type="InterPro" id="IPR038372">
    <property type="entry name" value="PA/PA-X_sf"/>
</dbReference>
<dbReference type="Pfam" id="PF00603">
    <property type="entry name" value="Flu_PA"/>
    <property type="match status" value="1"/>
</dbReference>
<organismHost>
    <name type="scientific">Aves</name>
    <dbReference type="NCBI Taxonomy" id="8782"/>
</organismHost>
<organismHost>
    <name type="scientific">Felis catus</name>
    <name type="common">Cat</name>
    <name type="synonym">Felis silvestris catus</name>
    <dbReference type="NCBI Taxonomy" id="9685"/>
</organismHost>
<organismHost>
    <name type="scientific">Homo sapiens</name>
    <name type="common">Human</name>
    <dbReference type="NCBI Taxonomy" id="9606"/>
</organismHost>
<organismHost>
    <name type="scientific">Panthera pardus</name>
    <name type="common">Leopard</name>
    <name type="synonym">Felis pardus</name>
    <dbReference type="NCBI Taxonomy" id="9691"/>
</organismHost>
<organismHost>
    <name type="scientific">Panthera tigris</name>
    <name type="common">Tiger</name>
    <dbReference type="NCBI Taxonomy" id="9694"/>
</organismHost>
<organismHost>
    <name type="scientific">Sus scrofa</name>
    <name type="common">Pig</name>
    <dbReference type="NCBI Taxonomy" id="9823"/>
</organismHost>
<evidence type="ECO:0000250" key="1">
    <source>
        <dbReference type="UniProtKB" id="P03433"/>
    </source>
</evidence>
<evidence type="ECO:0000255" key="2">
    <source>
        <dbReference type="HAMAP-Rule" id="MF_04063"/>
    </source>
</evidence>
<proteinExistence type="evidence at protein level"/>
<name>PA_I97A1</name>
<feature type="chain" id="PRO_0000078786" description="Polymerase acidic protein">
    <location>
        <begin position="1"/>
        <end position="716"/>
    </location>
</feature>
<feature type="short sequence motif" description="Nuclear localization signal 1 (NLS1)" evidence="1 2">
    <location>
        <begin position="124"/>
        <end position="139"/>
    </location>
</feature>
<feature type="short sequence motif" description="Nuclear localization signal 2 (NLS2)" evidence="1 2">
    <location>
        <begin position="184"/>
        <end position="247"/>
    </location>
</feature>
<feature type="binding site" evidence="2">
    <location>
        <position position="41"/>
    </location>
    <ligand>
        <name>Mn(2+)</name>
        <dbReference type="ChEBI" id="CHEBI:29035"/>
        <label>1</label>
    </ligand>
</feature>
<feature type="binding site" evidence="2">
    <location>
        <position position="80"/>
    </location>
    <ligand>
        <name>Mn(2+)</name>
        <dbReference type="ChEBI" id="CHEBI:29035"/>
        <label>2</label>
    </ligand>
</feature>
<feature type="binding site" evidence="2">
    <location>
        <position position="108"/>
    </location>
    <ligand>
        <name>Mn(2+)</name>
        <dbReference type="ChEBI" id="CHEBI:29035"/>
        <label>1</label>
    </ligand>
</feature>
<feature type="binding site" evidence="2">
    <location>
        <position position="108"/>
    </location>
    <ligand>
        <name>Mn(2+)</name>
        <dbReference type="ChEBI" id="CHEBI:29035"/>
        <label>2</label>
    </ligand>
</feature>
<feature type="binding site" evidence="2">
    <location>
        <position position="119"/>
    </location>
    <ligand>
        <name>Mn(2+)</name>
        <dbReference type="ChEBI" id="CHEBI:29035"/>
        <label>1</label>
    </ligand>
</feature>
<feature type="binding site" evidence="2">
    <location>
        <position position="120"/>
    </location>
    <ligand>
        <name>Mn(2+)</name>
        <dbReference type="ChEBI" id="CHEBI:29035"/>
        <label>1</label>
    </ligand>
</feature>
<feature type="sequence conflict" description="In Ref. 4; AAF74317." ref="4">
    <original>E</original>
    <variation>K</variation>
    <location>
        <position position="142"/>
    </location>
</feature>
<feature type="sequence conflict" description="In Ref. 2; AAC34270." ref="2">
    <original>A</original>
    <variation>G</variation>
    <location>
        <position position="448"/>
    </location>
</feature>
<accession>O89752</accession>
<accession>O56265</accession>
<accession>Q779I2</accession>
<accession>Q77VG0</accession>
<sequence>MEDFVRQCFNPMIVELAEKTMKEYGEDPKIETNKFAAICTHLEVCFMYSDFHFIDERGESIIVESGDPNALLKHRFEIIEGRDRAMAWTVVNSICNTTGVDKPKFLPDLYDYKENRFTEIGVTRREVHIYYLEKANKIKSEETHIHIFSFTGEEMATKADYTLDEESRARIKTRLFTIRQEMASRGLWDSFRQSERGEETIEERFEITGTMRRLADQSLPPNFSSLENFRAYVDGFKPNGCIEGKLSQMSKEVNARIEPFLKTTPRPLRLPDGPPCSQRSKFLLMDALKLSIEDPSHEGEGIPLYDAIKCMKTFFGWREPNIIKPHEKGINPNYLLAWKQVLAELQDIENEDKIPKTKNMKKTSQLMWALGENMAPEKVDFEDCKDIDDLKQYHSDEPELRSLASWIQNEFNKACELTDSSWIELDEIGEDVAPIEHIASMRRNYFTAEVSHCRATEYIMKGVYINTALLNASCAAMDDFQLIPMISKCRTKEGRRRTNLYGFIVKGRSHLRNDTDVVNFVSMEFSLTDPRLEPHKWEKYCVLEIGEMLLRTAIGQVSRPMFLYVRTNGTSKIKMKWGMEMRRCLLQSLQQIESMIEAESSIKEKDMTKEFFENRSETWPIGESPKGVEEGSIGKVCRTLLAKSVFNSLYSSPQLEGFSAESRKLLLIVQALRDNLEPGTFDLEGLYGAIEECLINDPWVLLNASWFNSFLTHALR</sequence>
<reference key="1">
    <citation type="journal article" date="1998" name="J. Virol.">
        <title>Comparisons of highly virulent H5N1 influenza A viruses isolated from humans and chickens from Hong Kong.</title>
        <authorList>
            <person name="Suarez D.L."/>
            <person name="Perdue M.L."/>
            <person name="Cox N."/>
            <person name="Rowe T."/>
            <person name="Bender C."/>
            <person name="Huang J."/>
            <person name="Swayne D.E."/>
        </authorList>
    </citation>
    <scope>NUCLEOTIDE SEQUENCE [GENOMIC RNA]</scope>
</reference>
<reference key="2">
    <citation type="journal article" date="2000" name="Proc. Natl. Acad. Sci. U.S.A.">
        <title>Avian-to-human transmission of H9N2 subtype influenza A viruses: relationship between H9N2 and H5N1 human isolates.</title>
        <authorList>
            <person name="Lin Y.P."/>
            <person name="Shaw M."/>
            <person name="Gregory V."/>
            <person name="Cameron K."/>
            <person name="Lim W."/>
            <person name="Klimov A."/>
            <person name="Subbarao K."/>
            <person name="Guan Y."/>
            <person name="Krauss S."/>
            <person name="Shortridge K."/>
            <person name="Webster R."/>
            <person name="Cox N."/>
            <person name="Hay A."/>
        </authorList>
    </citation>
    <scope>NUCLEOTIDE SEQUENCE [GENOMIC RNA]</scope>
</reference>
<reference key="3">
    <citation type="journal article" date="2000" name="J. Gen. Virol.">
        <title>Evolutionary characterization of the six internal genes of H5N1 human influenza A virus.</title>
        <authorList>
            <person name="Hiromoto Y."/>
            <person name="Yamazaki Y."/>
            <person name="Fukushima T."/>
            <person name="Saito T."/>
            <person name="Lindstrom S.E."/>
            <person name="Omoe K."/>
            <person name="Nerome R."/>
            <person name="Lim W."/>
            <person name="Sugita S."/>
            <person name="Nerome K."/>
        </authorList>
    </citation>
    <scope>NUCLEOTIDE SEQUENCE [GENOMIC RNA]</scope>
</reference>
<reference key="4">
    <citation type="journal article" date="1998" name="Science">
        <title>Characterization of an avian influenza A (H5N1) virus isolated from a child with a fatal respiratory illness.</title>
        <authorList>
            <person name="Subbarao K."/>
            <person name="Klimov A."/>
            <person name="Katz J."/>
            <person name="Regnery H."/>
            <person name="Lim W."/>
            <person name="Hall H."/>
            <person name="Perdue M."/>
            <person name="Swayne D."/>
            <person name="Bender C."/>
            <person name="Huang J."/>
            <person name="Hemphill M."/>
            <person name="Rowe T."/>
            <person name="Shaw M."/>
            <person name="Xu X."/>
            <person name="Fukuda K."/>
            <person name="Cox N."/>
        </authorList>
    </citation>
    <scope>NUCLEOTIDE SEQUENCE [GENOMIC RNA] OF 1-577</scope>
</reference>
<organism>
    <name type="scientific">Influenza A virus (strain A/Hong Kong/156/1997 H5N1 genotype Gs/Gd)</name>
    <dbReference type="NCBI Taxonomy" id="130763"/>
    <lineage>
        <taxon>Viruses</taxon>
        <taxon>Riboviria</taxon>
        <taxon>Orthornavirae</taxon>
        <taxon>Negarnaviricota</taxon>
        <taxon>Polyploviricotina</taxon>
        <taxon>Insthoviricetes</taxon>
        <taxon>Articulavirales</taxon>
        <taxon>Orthomyxoviridae</taxon>
        <taxon>Alphainfluenzavirus</taxon>
        <taxon>Alphainfluenzavirus influenzae</taxon>
        <taxon>Influenza A virus</taxon>
    </lineage>
</organism>
<comment type="function">
    <text evidence="2">Plays an essential role in viral RNA transcription and replication by forming the heterotrimeric polymerase complex together with PB1 and PB2 subunits. The complex transcribes viral mRNAs by using a unique mechanism called cap-snatching. It consists in the hijacking and cleavage of host capped pre-mRNAs. These short capped RNAs are then used as primers for viral mRNAs. The PB2 subunit is responsible for the binding of the 5' cap of cellular pre-mRNAs which are subsequently cleaved after 10-13 nucleotides by the PA subunit that carries the endonuclease activity.</text>
</comment>
<comment type="cofactor">
    <cofactor evidence="2">
        <name>Mn(2+)</name>
        <dbReference type="ChEBI" id="CHEBI:29035"/>
    </cofactor>
    <text evidence="2">Binds 2 manganese ions per subunit.</text>
</comment>
<comment type="subunit">
    <text evidence="1 2">Influenza RNA polymerase is composed of three subunits: PB1, PB2 and PA. Interacts (via C-terminus) with PB1 (via N-terminus).</text>
</comment>
<comment type="subcellular location">
    <subcellularLocation>
        <location evidence="2">Host cytoplasm</location>
    </subcellularLocation>
    <subcellularLocation>
        <location evidence="2">Host nucleus</location>
    </subcellularLocation>
    <text evidence="1 2">PB1 and PA are transported in the host nucleus as a complex.</text>
</comment>
<comment type="alternative products">
    <event type="ribosomal frameshifting"/>
    <isoform>
        <id>O89752-1</id>
        <name>PA</name>
        <sequence type="displayed"/>
    </isoform>
    <isoform>
        <id>P0DJR8-1</id>
        <name>PA-X</name>
        <sequence type="external"/>
    </isoform>
</comment>
<comment type="PTM">
    <text evidence="1 2">Phosphorylated on serines and threonines by host kinases, including human casein kinase II.</text>
</comment>
<comment type="similarity">
    <text evidence="2">Belongs to the influenza viruses PA family.</text>
</comment>
<keyword id="KW-0002">3D-structure</keyword>
<keyword id="KW-1157">Cap snatching</keyword>
<keyword id="KW-0255">Endonuclease</keyword>
<keyword id="KW-1262">Eukaryotic host gene expression shutoff by virus</keyword>
<keyword id="KW-1191">Eukaryotic host transcription shutoff by virus</keyword>
<keyword id="KW-1035">Host cytoplasm</keyword>
<keyword id="KW-1190">Host gene expression shutoff by virus</keyword>
<keyword id="KW-1048">Host nucleus</keyword>
<keyword id="KW-0945">Host-virus interaction</keyword>
<keyword id="KW-0378">Hydrolase</keyword>
<keyword id="KW-1104">Inhibition of host RNA polymerase II by virus</keyword>
<keyword id="KW-0464">Manganese</keyword>
<keyword id="KW-0479">Metal-binding</keyword>
<keyword id="KW-0540">Nuclease</keyword>
<keyword id="KW-0597">Phosphoprotein</keyword>
<keyword id="KW-0688">Ribosomal frameshifting</keyword>
<gene>
    <name evidence="2" type="primary">PA</name>
</gene>